<name>DTD_STRCO</name>
<sequence length="141" mass="14968">MRAVVQRVDGASVVVDGETVGAIDGEGLCVLVGVTHDDTKEKAAQLARKLWSVRILHDEKSCSDLDAPLLVISQFTLYGDARKGRRPTWNAAAPGDVAEPLVDEVVAQLRALGATVATGRFGAQMRVSLTNDGPFTVLVEV</sequence>
<feature type="chain" id="PRO_0000164597" description="D-aminoacyl-tRNA deacylase">
    <location>
        <begin position="1"/>
        <end position="141"/>
    </location>
</feature>
<feature type="short sequence motif" description="Gly-cisPro motif, important for rejection of L-amino acids" evidence="1">
    <location>
        <begin position="133"/>
        <end position="134"/>
    </location>
</feature>
<dbReference type="EC" id="3.1.1.96" evidence="1"/>
<dbReference type="EMBL" id="AL939119">
    <property type="protein sequence ID" value="CAB94086.1"/>
    <property type="molecule type" value="Genomic_DNA"/>
</dbReference>
<dbReference type="RefSeq" id="NP_628358.1">
    <property type="nucleotide sequence ID" value="NC_003888.3"/>
</dbReference>
<dbReference type="RefSeq" id="WP_011029487.1">
    <property type="nucleotide sequence ID" value="NZ_VNID01000038.1"/>
</dbReference>
<dbReference type="SMR" id="Q9K4F6"/>
<dbReference type="FunCoup" id="Q9K4F6">
    <property type="interactions" value="357"/>
</dbReference>
<dbReference type="STRING" id="100226.gene:17761826"/>
<dbReference type="PaxDb" id="100226-SCO4182"/>
<dbReference type="GeneID" id="91384853"/>
<dbReference type="KEGG" id="sco:SCO4182"/>
<dbReference type="PATRIC" id="fig|100226.15.peg.4246"/>
<dbReference type="eggNOG" id="COG1490">
    <property type="taxonomic scope" value="Bacteria"/>
</dbReference>
<dbReference type="HOGENOM" id="CLU_076901_1_2_11"/>
<dbReference type="InParanoid" id="Q9K4F6"/>
<dbReference type="OrthoDB" id="9801395at2"/>
<dbReference type="PhylomeDB" id="Q9K4F6"/>
<dbReference type="Proteomes" id="UP000001973">
    <property type="component" value="Chromosome"/>
</dbReference>
<dbReference type="GO" id="GO:0005737">
    <property type="term" value="C:cytoplasm"/>
    <property type="evidence" value="ECO:0000318"/>
    <property type="project" value="GO_Central"/>
</dbReference>
<dbReference type="GO" id="GO:0051500">
    <property type="term" value="F:D-tyrosyl-tRNA(Tyr) deacylase activity"/>
    <property type="evidence" value="ECO:0000318"/>
    <property type="project" value="GO_Central"/>
</dbReference>
<dbReference type="GO" id="GO:0106026">
    <property type="term" value="F:Gly-tRNA(Ala) deacylase activity"/>
    <property type="evidence" value="ECO:0007669"/>
    <property type="project" value="UniProtKB-UniRule"/>
</dbReference>
<dbReference type="GO" id="GO:0043908">
    <property type="term" value="F:Ser(Gly)-tRNA(Ala) hydrolase activity"/>
    <property type="evidence" value="ECO:0007669"/>
    <property type="project" value="UniProtKB-UniRule"/>
</dbReference>
<dbReference type="GO" id="GO:0000049">
    <property type="term" value="F:tRNA binding"/>
    <property type="evidence" value="ECO:0007669"/>
    <property type="project" value="UniProtKB-UniRule"/>
</dbReference>
<dbReference type="GO" id="GO:0019478">
    <property type="term" value="P:D-amino acid catabolic process"/>
    <property type="evidence" value="ECO:0007669"/>
    <property type="project" value="UniProtKB-UniRule"/>
</dbReference>
<dbReference type="GO" id="GO:0006399">
    <property type="term" value="P:tRNA metabolic process"/>
    <property type="evidence" value="ECO:0000318"/>
    <property type="project" value="GO_Central"/>
</dbReference>
<dbReference type="CDD" id="cd00563">
    <property type="entry name" value="Dtyr_deacylase"/>
    <property type="match status" value="1"/>
</dbReference>
<dbReference type="FunFam" id="3.50.80.10:FF:000002">
    <property type="entry name" value="D-aminoacyl-tRNA deacylase"/>
    <property type="match status" value="1"/>
</dbReference>
<dbReference type="Gene3D" id="3.50.80.10">
    <property type="entry name" value="D-tyrosyl-tRNA(Tyr) deacylase"/>
    <property type="match status" value="1"/>
</dbReference>
<dbReference type="HAMAP" id="MF_00518">
    <property type="entry name" value="Deacylase_Dtd"/>
    <property type="match status" value="1"/>
</dbReference>
<dbReference type="InterPro" id="IPR003732">
    <property type="entry name" value="Daa-tRNA_deacyls_DTD"/>
</dbReference>
<dbReference type="InterPro" id="IPR023509">
    <property type="entry name" value="DTD-like_sf"/>
</dbReference>
<dbReference type="NCBIfam" id="TIGR00256">
    <property type="entry name" value="D-aminoacyl-tRNA deacylase"/>
    <property type="match status" value="1"/>
</dbReference>
<dbReference type="PANTHER" id="PTHR10472:SF5">
    <property type="entry name" value="D-AMINOACYL-TRNA DEACYLASE 1"/>
    <property type="match status" value="1"/>
</dbReference>
<dbReference type="PANTHER" id="PTHR10472">
    <property type="entry name" value="D-TYROSYL-TRNA TYR DEACYLASE"/>
    <property type="match status" value="1"/>
</dbReference>
<dbReference type="Pfam" id="PF02580">
    <property type="entry name" value="Tyr_Deacylase"/>
    <property type="match status" value="1"/>
</dbReference>
<dbReference type="SUPFAM" id="SSF69500">
    <property type="entry name" value="DTD-like"/>
    <property type="match status" value="1"/>
</dbReference>
<organism>
    <name type="scientific">Streptomyces coelicolor (strain ATCC BAA-471 / A3(2) / M145)</name>
    <dbReference type="NCBI Taxonomy" id="100226"/>
    <lineage>
        <taxon>Bacteria</taxon>
        <taxon>Bacillati</taxon>
        <taxon>Actinomycetota</taxon>
        <taxon>Actinomycetes</taxon>
        <taxon>Kitasatosporales</taxon>
        <taxon>Streptomycetaceae</taxon>
        <taxon>Streptomyces</taxon>
        <taxon>Streptomyces albidoflavus group</taxon>
    </lineage>
</organism>
<keyword id="KW-0963">Cytoplasm</keyword>
<keyword id="KW-0378">Hydrolase</keyword>
<keyword id="KW-1185">Reference proteome</keyword>
<keyword id="KW-0694">RNA-binding</keyword>
<keyword id="KW-0820">tRNA-binding</keyword>
<comment type="function">
    <text evidence="1">An aminoacyl-tRNA editing enzyme that deacylates mischarged D-aminoacyl-tRNAs. Also deacylates mischarged glycyl-tRNA(Ala), protecting cells against glycine mischarging by AlaRS. Acts via tRNA-based rather than protein-based catalysis; rejects L-amino acids rather than detecting D-amino acids in the active site. By recycling D-aminoacyl-tRNA to D-amino acids and free tRNA molecules, this enzyme counteracts the toxicity associated with the formation of D-aminoacyl-tRNA entities in vivo and helps enforce protein L-homochirality.</text>
</comment>
<comment type="catalytic activity">
    <reaction evidence="1">
        <text>glycyl-tRNA(Ala) + H2O = tRNA(Ala) + glycine + H(+)</text>
        <dbReference type="Rhea" id="RHEA:53744"/>
        <dbReference type="Rhea" id="RHEA-COMP:9657"/>
        <dbReference type="Rhea" id="RHEA-COMP:13640"/>
        <dbReference type="ChEBI" id="CHEBI:15377"/>
        <dbReference type="ChEBI" id="CHEBI:15378"/>
        <dbReference type="ChEBI" id="CHEBI:57305"/>
        <dbReference type="ChEBI" id="CHEBI:78442"/>
        <dbReference type="ChEBI" id="CHEBI:78522"/>
        <dbReference type="EC" id="3.1.1.96"/>
    </reaction>
</comment>
<comment type="catalytic activity">
    <reaction evidence="1">
        <text>a D-aminoacyl-tRNA + H2O = a tRNA + a D-alpha-amino acid + H(+)</text>
        <dbReference type="Rhea" id="RHEA:13953"/>
        <dbReference type="Rhea" id="RHEA-COMP:10123"/>
        <dbReference type="Rhea" id="RHEA-COMP:10124"/>
        <dbReference type="ChEBI" id="CHEBI:15377"/>
        <dbReference type="ChEBI" id="CHEBI:15378"/>
        <dbReference type="ChEBI" id="CHEBI:59871"/>
        <dbReference type="ChEBI" id="CHEBI:78442"/>
        <dbReference type="ChEBI" id="CHEBI:79333"/>
        <dbReference type="EC" id="3.1.1.96"/>
    </reaction>
</comment>
<comment type="subunit">
    <text evidence="1">Homodimer.</text>
</comment>
<comment type="subcellular location">
    <subcellularLocation>
        <location evidence="1">Cytoplasm</location>
    </subcellularLocation>
</comment>
<comment type="domain">
    <text evidence="1">A Gly-cisPro motif from one monomer fits into the active site of the other monomer to allow specific chiral rejection of L-amino acids.</text>
</comment>
<comment type="similarity">
    <text evidence="1">Belongs to the DTD family.</text>
</comment>
<evidence type="ECO:0000255" key="1">
    <source>
        <dbReference type="HAMAP-Rule" id="MF_00518"/>
    </source>
</evidence>
<reference key="1">
    <citation type="journal article" date="2002" name="Nature">
        <title>Complete genome sequence of the model actinomycete Streptomyces coelicolor A3(2).</title>
        <authorList>
            <person name="Bentley S.D."/>
            <person name="Chater K.F."/>
            <person name="Cerdeno-Tarraga A.-M."/>
            <person name="Challis G.L."/>
            <person name="Thomson N.R."/>
            <person name="James K.D."/>
            <person name="Harris D.E."/>
            <person name="Quail M.A."/>
            <person name="Kieser H."/>
            <person name="Harper D."/>
            <person name="Bateman A."/>
            <person name="Brown S."/>
            <person name="Chandra G."/>
            <person name="Chen C.W."/>
            <person name="Collins M."/>
            <person name="Cronin A."/>
            <person name="Fraser A."/>
            <person name="Goble A."/>
            <person name="Hidalgo J."/>
            <person name="Hornsby T."/>
            <person name="Howarth S."/>
            <person name="Huang C.-H."/>
            <person name="Kieser T."/>
            <person name="Larke L."/>
            <person name="Murphy L.D."/>
            <person name="Oliver K."/>
            <person name="O'Neil S."/>
            <person name="Rabbinowitsch E."/>
            <person name="Rajandream M.A."/>
            <person name="Rutherford K.M."/>
            <person name="Rutter S."/>
            <person name="Seeger K."/>
            <person name="Saunders D."/>
            <person name="Sharp S."/>
            <person name="Squares R."/>
            <person name="Squares S."/>
            <person name="Taylor K."/>
            <person name="Warren T."/>
            <person name="Wietzorrek A."/>
            <person name="Woodward J.R."/>
            <person name="Barrell B.G."/>
            <person name="Parkhill J."/>
            <person name="Hopwood D.A."/>
        </authorList>
    </citation>
    <scope>NUCLEOTIDE SEQUENCE [LARGE SCALE GENOMIC DNA]</scope>
    <source>
        <strain>ATCC BAA-471 / A3(2) / M145</strain>
    </source>
</reference>
<proteinExistence type="inferred from homology"/>
<gene>
    <name evidence="1" type="primary">dtd</name>
    <name type="ordered locus">SCO4182</name>
    <name type="ORF">SCD66.19c</name>
</gene>
<protein>
    <recommendedName>
        <fullName evidence="1">D-aminoacyl-tRNA deacylase</fullName>
        <shortName evidence="1">DTD</shortName>
        <ecNumber evidence="1">3.1.1.96</ecNumber>
    </recommendedName>
    <alternativeName>
        <fullName evidence="1">Gly-tRNA(Ala) deacylase</fullName>
    </alternativeName>
</protein>
<accession>Q9K4F6</accession>